<dbReference type="EC" id="1.-.-.-"/>
<dbReference type="EMBL" id="CU329670">
    <property type="protein sequence ID" value="CAB16386.1"/>
    <property type="molecule type" value="Genomic_DNA"/>
</dbReference>
<dbReference type="PIR" id="T11633">
    <property type="entry name" value="T11633"/>
</dbReference>
<dbReference type="RefSeq" id="NP_594192.1">
    <property type="nucleotide sequence ID" value="NM_001019616.2"/>
</dbReference>
<dbReference type="SMR" id="O14125"/>
<dbReference type="FunCoup" id="O14125">
    <property type="interactions" value="389"/>
</dbReference>
<dbReference type="STRING" id="284812.O14125"/>
<dbReference type="iPTMnet" id="O14125"/>
<dbReference type="PaxDb" id="4896-SPAC3A11.11c.1"/>
<dbReference type="EnsemblFungi" id="SPAC3A11.11c.1">
    <property type="protein sequence ID" value="SPAC3A11.11c.1:pep"/>
    <property type="gene ID" value="SPAC3A11.11c"/>
</dbReference>
<dbReference type="KEGG" id="spo:2543167"/>
<dbReference type="PomBase" id="SPAC3A11.11c"/>
<dbReference type="VEuPathDB" id="FungiDB:SPAC3A11.11c"/>
<dbReference type="eggNOG" id="KOG1575">
    <property type="taxonomic scope" value="Eukaryota"/>
</dbReference>
<dbReference type="HOGENOM" id="CLU_023205_2_1_1"/>
<dbReference type="InParanoid" id="O14125"/>
<dbReference type="OMA" id="NSMTIIK"/>
<dbReference type="PhylomeDB" id="O14125"/>
<dbReference type="PRO" id="PR:O14125"/>
<dbReference type="Proteomes" id="UP000002485">
    <property type="component" value="Chromosome I"/>
</dbReference>
<dbReference type="GO" id="GO:0005737">
    <property type="term" value="C:cytoplasm"/>
    <property type="evidence" value="ECO:0000318"/>
    <property type="project" value="GO_Central"/>
</dbReference>
<dbReference type="GO" id="GO:0005829">
    <property type="term" value="C:cytosol"/>
    <property type="evidence" value="ECO:0007005"/>
    <property type="project" value="PomBase"/>
</dbReference>
<dbReference type="GO" id="GO:0005634">
    <property type="term" value="C:nucleus"/>
    <property type="evidence" value="ECO:0007005"/>
    <property type="project" value="PomBase"/>
</dbReference>
<dbReference type="GO" id="GO:0004033">
    <property type="term" value="F:aldo-keto reductase (NADPH) activity"/>
    <property type="evidence" value="ECO:0000318"/>
    <property type="project" value="GO_Central"/>
</dbReference>
<dbReference type="CDD" id="cd19077">
    <property type="entry name" value="AKR_AKR8A1-2"/>
    <property type="match status" value="1"/>
</dbReference>
<dbReference type="Gene3D" id="3.20.20.100">
    <property type="entry name" value="NADP-dependent oxidoreductase domain"/>
    <property type="match status" value="1"/>
</dbReference>
<dbReference type="InterPro" id="IPR050791">
    <property type="entry name" value="Aldo-Keto_reductase"/>
</dbReference>
<dbReference type="InterPro" id="IPR023210">
    <property type="entry name" value="NADP_OxRdtase_dom"/>
</dbReference>
<dbReference type="InterPro" id="IPR036812">
    <property type="entry name" value="NADP_OxRdtase_dom_sf"/>
</dbReference>
<dbReference type="PANTHER" id="PTHR43625">
    <property type="entry name" value="AFLATOXIN B1 ALDEHYDE REDUCTASE"/>
    <property type="match status" value="1"/>
</dbReference>
<dbReference type="PANTHER" id="PTHR43625:SF78">
    <property type="entry name" value="PYRIDOXAL REDUCTASE-RELATED"/>
    <property type="match status" value="1"/>
</dbReference>
<dbReference type="Pfam" id="PF00248">
    <property type="entry name" value="Aldo_ket_red"/>
    <property type="match status" value="1"/>
</dbReference>
<dbReference type="SUPFAM" id="SSF51430">
    <property type="entry name" value="NAD(P)-linked oxidoreductase"/>
    <property type="match status" value="1"/>
</dbReference>
<keyword id="KW-0963">Cytoplasm</keyword>
<keyword id="KW-0539">Nucleus</keyword>
<keyword id="KW-0560">Oxidoreductase</keyword>
<keyword id="KW-1185">Reference proteome</keyword>
<protein>
    <recommendedName>
        <fullName>Uncharacterized oxidoreductase C3A11.11c</fullName>
        <ecNumber>1.-.-.-</ecNumber>
    </recommendedName>
</protein>
<comment type="subcellular location">
    <subcellularLocation>
        <location evidence="3">Cytoplasm</location>
    </subcellularLocation>
    <subcellularLocation>
        <location evidence="3">Nucleus</location>
    </subcellularLocation>
</comment>
<comment type="similarity">
    <text evidence="4">Belongs to the aldo/keto reductase family.</text>
</comment>
<evidence type="ECO:0000250" key="1"/>
<evidence type="ECO:0000256" key="2">
    <source>
        <dbReference type="SAM" id="MobiDB-lite"/>
    </source>
</evidence>
<evidence type="ECO:0000269" key="3">
    <source>
    </source>
</evidence>
<evidence type="ECO:0000305" key="4"/>
<sequence>MPYINNFLVGPIGLGLKSLTWTENPVPDEEAFRIMNYALSHGCSFWDAGEFYGLSEPLANLQLLSRYFQKFPDSIDKVFLSVKGAFDPETHRVHGTRECITKSIKTVRETLKKVKTIDLYQCAAIDPDTPIEETMACLKEFVDSGDIRCIGLCEPSVEEIKRAHSVVRIAAIEVHYSMLFREIEYNGVKKLCHDLSIPLVAHSPLAHGLLTGRVTTMADIENLKKHHQCNEQPPSSTFSSTLPCIQALKELASKYDMSLAELALSFILSAGRGRILPIPSATSYDLIEASLGSFSKVLDTYQFAEVVSCLEKTLPPPASPNSEPQVTGGCSSMC</sequence>
<reference key="1">
    <citation type="journal article" date="2002" name="Nature">
        <title>The genome sequence of Schizosaccharomyces pombe.</title>
        <authorList>
            <person name="Wood V."/>
            <person name="Gwilliam R."/>
            <person name="Rajandream M.A."/>
            <person name="Lyne M.H."/>
            <person name="Lyne R."/>
            <person name="Stewart A."/>
            <person name="Sgouros J.G."/>
            <person name="Peat N."/>
            <person name="Hayles J."/>
            <person name="Baker S.G."/>
            <person name="Basham D."/>
            <person name="Bowman S."/>
            <person name="Brooks K."/>
            <person name="Brown D."/>
            <person name="Brown S."/>
            <person name="Chillingworth T."/>
            <person name="Churcher C.M."/>
            <person name="Collins M."/>
            <person name="Connor R."/>
            <person name="Cronin A."/>
            <person name="Davis P."/>
            <person name="Feltwell T."/>
            <person name="Fraser A."/>
            <person name="Gentles S."/>
            <person name="Goble A."/>
            <person name="Hamlin N."/>
            <person name="Harris D.E."/>
            <person name="Hidalgo J."/>
            <person name="Hodgson G."/>
            <person name="Holroyd S."/>
            <person name="Hornsby T."/>
            <person name="Howarth S."/>
            <person name="Huckle E.J."/>
            <person name="Hunt S."/>
            <person name="Jagels K."/>
            <person name="James K.D."/>
            <person name="Jones L."/>
            <person name="Jones M."/>
            <person name="Leather S."/>
            <person name="McDonald S."/>
            <person name="McLean J."/>
            <person name="Mooney P."/>
            <person name="Moule S."/>
            <person name="Mungall K.L."/>
            <person name="Murphy L.D."/>
            <person name="Niblett D."/>
            <person name="Odell C."/>
            <person name="Oliver K."/>
            <person name="O'Neil S."/>
            <person name="Pearson D."/>
            <person name="Quail M.A."/>
            <person name="Rabbinowitsch E."/>
            <person name="Rutherford K.M."/>
            <person name="Rutter S."/>
            <person name="Saunders D."/>
            <person name="Seeger K."/>
            <person name="Sharp S."/>
            <person name="Skelton J."/>
            <person name="Simmonds M.N."/>
            <person name="Squares R."/>
            <person name="Squares S."/>
            <person name="Stevens K."/>
            <person name="Taylor K."/>
            <person name="Taylor R.G."/>
            <person name="Tivey A."/>
            <person name="Walsh S.V."/>
            <person name="Warren T."/>
            <person name="Whitehead S."/>
            <person name="Woodward J.R."/>
            <person name="Volckaert G."/>
            <person name="Aert R."/>
            <person name="Robben J."/>
            <person name="Grymonprez B."/>
            <person name="Weltjens I."/>
            <person name="Vanstreels E."/>
            <person name="Rieger M."/>
            <person name="Schaefer M."/>
            <person name="Mueller-Auer S."/>
            <person name="Gabel C."/>
            <person name="Fuchs M."/>
            <person name="Duesterhoeft A."/>
            <person name="Fritzc C."/>
            <person name="Holzer E."/>
            <person name="Moestl D."/>
            <person name="Hilbert H."/>
            <person name="Borzym K."/>
            <person name="Langer I."/>
            <person name="Beck A."/>
            <person name="Lehrach H."/>
            <person name="Reinhardt R."/>
            <person name="Pohl T.M."/>
            <person name="Eger P."/>
            <person name="Zimmermann W."/>
            <person name="Wedler H."/>
            <person name="Wambutt R."/>
            <person name="Purnelle B."/>
            <person name="Goffeau A."/>
            <person name="Cadieu E."/>
            <person name="Dreano S."/>
            <person name="Gloux S."/>
            <person name="Lelaure V."/>
            <person name="Mottier S."/>
            <person name="Galibert F."/>
            <person name="Aves S.J."/>
            <person name="Xiang Z."/>
            <person name="Hunt C."/>
            <person name="Moore K."/>
            <person name="Hurst S.M."/>
            <person name="Lucas M."/>
            <person name="Rochet M."/>
            <person name="Gaillardin C."/>
            <person name="Tallada V.A."/>
            <person name="Garzon A."/>
            <person name="Thode G."/>
            <person name="Daga R.R."/>
            <person name="Cruzado L."/>
            <person name="Jimenez J."/>
            <person name="Sanchez M."/>
            <person name="del Rey F."/>
            <person name="Benito J."/>
            <person name="Dominguez A."/>
            <person name="Revuelta J.L."/>
            <person name="Moreno S."/>
            <person name="Armstrong J."/>
            <person name="Forsburg S.L."/>
            <person name="Cerutti L."/>
            <person name="Lowe T."/>
            <person name="McCombie W.R."/>
            <person name="Paulsen I."/>
            <person name="Potashkin J."/>
            <person name="Shpakovski G.V."/>
            <person name="Ussery D."/>
            <person name="Barrell B.G."/>
            <person name="Nurse P."/>
        </authorList>
    </citation>
    <scope>NUCLEOTIDE SEQUENCE [LARGE SCALE GENOMIC DNA]</scope>
    <source>
        <strain>972 / ATCC 24843</strain>
    </source>
</reference>
<reference key="2">
    <citation type="journal article" date="2006" name="Nat. Biotechnol.">
        <title>ORFeome cloning and global analysis of protein localization in the fission yeast Schizosaccharomyces pombe.</title>
        <authorList>
            <person name="Matsuyama A."/>
            <person name="Arai R."/>
            <person name="Yashiroda Y."/>
            <person name="Shirai A."/>
            <person name="Kamata A."/>
            <person name="Sekido S."/>
            <person name="Kobayashi Y."/>
            <person name="Hashimoto A."/>
            <person name="Hamamoto M."/>
            <person name="Hiraoka Y."/>
            <person name="Horinouchi S."/>
            <person name="Yoshida M."/>
        </authorList>
    </citation>
    <scope>SUBCELLULAR LOCATION [LARGE SCALE ANALYSIS]</scope>
</reference>
<accession>O14125</accession>
<gene>
    <name type="ORF">SPAC3A11.11c</name>
</gene>
<organism>
    <name type="scientific">Schizosaccharomyces pombe (strain 972 / ATCC 24843)</name>
    <name type="common">Fission yeast</name>
    <dbReference type="NCBI Taxonomy" id="284812"/>
    <lineage>
        <taxon>Eukaryota</taxon>
        <taxon>Fungi</taxon>
        <taxon>Dikarya</taxon>
        <taxon>Ascomycota</taxon>
        <taxon>Taphrinomycotina</taxon>
        <taxon>Schizosaccharomycetes</taxon>
        <taxon>Schizosaccharomycetales</taxon>
        <taxon>Schizosaccharomycetaceae</taxon>
        <taxon>Schizosaccharomyces</taxon>
    </lineage>
</organism>
<feature type="chain" id="PRO_0000310311" description="Uncharacterized oxidoreductase C3A11.11c">
    <location>
        <begin position="1"/>
        <end position="334"/>
    </location>
</feature>
<feature type="region of interest" description="Disordered" evidence="2">
    <location>
        <begin position="314"/>
        <end position="334"/>
    </location>
</feature>
<feature type="compositionally biased region" description="Polar residues" evidence="2">
    <location>
        <begin position="320"/>
        <end position="334"/>
    </location>
</feature>
<feature type="active site" description="Proton donor" evidence="1">
    <location>
        <position position="52"/>
    </location>
</feature>
<proteinExistence type="inferred from homology"/>
<name>YEZB_SCHPO</name>